<evidence type="ECO:0000255" key="1">
    <source>
        <dbReference type="HAMAP-Rule" id="MF_01631"/>
    </source>
</evidence>
<reference key="1">
    <citation type="journal article" date="2006" name="Nat. Biotechnol.">
        <title>Complete genome sequence of the entomopathogenic and metabolically versatile soil bacterium Pseudomonas entomophila.</title>
        <authorList>
            <person name="Vodovar N."/>
            <person name="Vallenet D."/>
            <person name="Cruveiller S."/>
            <person name="Rouy Z."/>
            <person name="Barbe V."/>
            <person name="Acosta C."/>
            <person name="Cattolico L."/>
            <person name="Jubin C."/>
            <person name="Lajus A."/>
            <person name="Segurens B."/>
            <person name="Vacherie B."/>
            <person name="Wincker P."/>
            <person name="Weissenbach J."/>
            <person name="Lemaitre B."/>
            <person name="Medigue C."/>
            <person name="Boccard F."/>
        </authorList>
    </citation>
    <scope>NUCLEOTIDE SEQUENCE [LARGE SCALE GENOMIC DNA]</scope>
    <source>
        <strain>L48</strain>
    </source>
</reference>
<protein>
    <recommendedName>
        <fullName evidence="1">Bifunctional protein GlmU</fullName>
    </recommendedName>
    <domain>
        <recommendedName>
            <fullName evidence="1">UDP-N-acetylglucosamine pyrophosphorylase</fullName>
            <ecNumber evidence="1">2.7.7.23</ecNumber>
        </recommendedName>
        <alternativeName>
            <fullName evidence="1">N-acetylglucosamine-1-phosphate uridyltransferase</fullName>
        </alternativeName>
    </domain>
    <domain>
        <recommendedName>
            <fullName evidence="1">Glucosamine-1-phosphate N-acetyltransferase</fullName>
            <ecNumber evidence="1">2.3.1.157</ecNumber>
        </recommendedName>
    </domain>
</protein>
<name>GLMU_PSEE4</name>
<feature type="chain" id="PRO_1000056186" description="Bifunctional protein GlmU">
    <location>
        <begin position="1"/>
        <end position="455"/>
    </location>
</feature>
<feature type="region of interest" description="Pyrophosphorylase" evidence="1">
    <location>
        <begin position="1"/>
        <end position="226"/>
    </location>
</feature>
<feature type="region of interest" description="Linker" evidence="1">
    <location>
        <begin position="227"/>
        <end position="247"/>
    </location>
</feature>
<feature type="region of interest" description="N-acetyltransferase" evidence="1">
    <location>
        <begin position="248"/>
        <end position="455"/>
    </location>
</feature>
<feature type="active site" description="Proton acceptor" evidence="1">
    <location>
        <position position="360"/>
    </location>
</feature>
<feature type="binding site" evidence="1">
    <location>
        <begin position="8"/>
        <end position="11"/>
    </location>
    <ligand>
        <name>UDP-N-acetyl-alpha-D-glucosamine</name>
        <dbReference type="ChEBI" id="CHEBI:57705"/>
    </ligand>
</feature>
<feature type="binding site" evidence="1">
    <location>
        <position position="22"/>
    </location>
    <ligand>
        <name>UDP-N-acetyl-alpha-D-glucosamine</name>
        <dbReference type="ChEBI" id="CHEBI:57705"/>
    </ligand>
</feature>
<feature type="binding site" evidence="1">
    <location>
        <position position="73"/>
    </location>
    <ligand>
        <name>UDP-N-acetyl-alpha-D-glucosamine</name>
        <dbReference type="ChEBI" id="CHEBI:57705"/>
    </ligand>
</feature>
<feature type="binding site" evidence="1">
    <location>
        <begin position="78"/>
        <end position="79"/>
    </location>
    <ligand>
        <name>UDP-N-acetyl-alpha-D-glucosamine</name>
        <dbReference type="ChEBI" id="CHEBI:57705"/>
    </ligand>
</feature>
<feature type="binding site" evidence="1">
    <location>
        <begin position="99"/>
        <end position="101"/>
    </location>
    <ligand>
        <name>UDP-N-acetyl-alpha-D-glucosamine</name>
        <dbReference type="ChEBI" id="CHEBI:57705"/>
    </ligand>
</feature>
<feature type="binding site" evidence="1">
    <location>
        <position position="101"/>
    </location>
    <ligand>
        <name>Mg(2+)</name>
        <dbReference type="ChEBI" id="CHEBI:18420"/>
    </ligand>
</feature>
<feature type="binding site" evidence="1">
    <location>
        <position position="136"/>
    </location>
    <ligand>
        <name>UDP-N-acetyl-alpha-D-glucosamine</name>
        <dbReference type="ChEBI" id="CHEBI:57705"/>
    </ligand>
</feature>
<feature type="binding site" evidence="1">
    <location>
        <position position="151"/>
    </location>
    <ligand>
        <name>UDP-N-acetyl-alpha-D-glucosamine</name>
        <dbReference type="ChEBI" id="CHEBI:57705"/>
    </ligand>
</feature>
<feature type="binding site" evidence="1">
    <location>
        <position position="166"/>
    </location>
    <ligand>
        <name>UDP-N-acetyl-alpha-D-glucosamine</name>
        <dbReference type="ChEBI" id="CHEBI:57705"/>
    </ligand>
</feature>
<feature type="binding site" evidence="1">
    <location>
        <position position="224"/>
    </location>
    <ligand>
        <name>Mg(2+)</name>
        <dbReference type="ChEBI" id="CHEBI:18420"/>
    </ligand>
</feature>
<feature type="binding site" evidence="1">
    <location>
        <position position="224"/>
    </location>
    <ligand>
        <name>UDP-N-acetyl-alpha-D-glucosamine</name>
        <dbReference type="ChEBI" id="CHEBI:57705"/>
    </ligand>
</feature>
<feature type="binding site" evidence="1">
    <location>
        <position position="330"/>
    </location>
    <ligand>
        <name>UDP-N-acetyl-alpha-D-glucosamine</name>
        <dbReference type="ChEBI" id="CHEBI:57705"/>
    </ligand>
</feature>
<feature type="binding site" evidence="1">
    <location>
        <position position="348"/>
    </location>
    <ligand>
        <name>UDP-N-acetyl-alpha-D-glucosamine</name>
        <dbReference type="ChEBI" id="CHEBI:57705"/>
    </ligand>
</feature>
<feature type="binding site" evidence="1">
    <location>
        <position position="363"/>
    </location>
    <ligand>
        <name>UDP-N-acetyl-alpha-D-glucosamine</name>
        <dbReference type="ChEBI" id="CHEBI:57705"/>
    </ligand>
</feature>
<feature type="binding site" evidence="1">
    <location>
        <position position="374"/>
    </location>
    <ligand>
        <name>UDP-N-acetyl-alpha-D-glucosamine</name>
        <dbReference type="ChEBI" id="CHEBI:57705"/>
    </ligand>
</feature>
<feature type="binding site" evidence="1">
    <location>
        <position position="377"/>
    </location>
    <ligand>
        <name>acetyl-CoA</name>
        <dbReference type="ChEBI" id="CHEBI:57288"/>
    </ligand>
</feature>
<feature type="binding site" evidence="1">
    <location>
        <begin position="383"/>
        <end position="384"/>
    </location>
    <ligand>
        <name>acetyl-CoA</name>
        <dbReference type="ChEBI" id="CHEBI:57288"/>
    </ligand>
</feature>
<feature type="binding site" evidence="1">
    <location>
        <position position="402"/>
    </location>
    <ligand>
        <name>acetyl-CoA</name>
        <dbReference type="ChEBI" id="CHEBI:57288"/>
    </ligand>
</feature>
<feature type="binding site" evidence="1">
    <location>
        <position position="420"/>
    </location>
    <ligand>
        <name>acetyl-CoA</name>
        <dbReference type="ChEBI" id="CHEBI:57288"/>
    </ligand>
</feature>
<feature type="binding site" evidence="1">
    <location>
        <position position="437"/>
    </location>
    <ligand>
        <name>acetyl-CoA</name>
        <dbReference type="ChEBI" id="CHEBI:57288"/>
    </ligand>
</feature>
<gene>
    <name evidence="1" type="primary">glmU</name>
    <name type="ordered locus">PSEEN5540</name>
</gene>
<dbReference type="EC" id="2.7.7.23" evidence="1"/>
<dbReference type="EC" id="2.3.1.157" evidence="1"/>
<dbReference type="EMBL" id="CT573326">
    <property type="protein sequence ID" value="CAK18147.1"/>
    <property type="molecule type" value="Genomic_DNA"/>
</dbReference>
<dbReference type="RefSeq" id="WP_011536499.1">
    <property type="nucleotide sequence ID" value="NC_008027.1"/>
</dbReference>
<dbReference type="SMR" id="Q1I2I9"/>
<dbReference type="STRING" id="384676.PSEEN5540"/>
<dbReference type="GeneID" id="32808439"/>
<dbReference type="KEGG" id="pen:PSEEN5540"/>
<dbReference type="eggNOG" id="COG1207">
    <property type="taxonomic scope" value="Bacteria"/>
</dbReference>
<dbReference type="HOGENOM" id="CLU_029499_15_2_6"/>
<dbReference type="OrthoDB" id="9775031at2"/>
<dbReference type="UniPathway" id="UPA00113">
    <property type="reaction ID" value="UER00532"/>
</dbReference>
<dbReference type="UniPathway" id="UPA00113">
    <property type="reaction ID" value="UER00533"/>
</dbReference>
<dbReference type="UniPathway" id="UPA00973"/>
<dbReference type="Proteomes" id="UP000000658">
    <property type="component" value="Chromosome"/>
</dbReference>
<dbReference type="GO" id="GO:0005737">
    <property type="term" value="C:cytoplasm"/>
    <property type="evidence" value="ECO:0007669"/>
    <property type="project" value="UniProtKB-SubCell"/>
</dbReference>
<dbReference type="GO" id="GO:0016020">
    <property type="term" value="C:membrane"/>
    <property type="evidence" value="ECO:0007669"/>
    <property type="project" value="GOC"/>
</dbReference>
<dbReference type="GO" id="GO:0019134">
    <property type="term" value="F:glucosamine-1-phosphate N-acetyltransferase activity"/>
    <property type="evidence" value="ECO:0007669"/>
    <property type="project" value="UniProtKB-UniRule"/>
</dbReference>
<dbReference type="GO" id="GO:0000287">
    <property type="term" value="F:magnesium ion binding"/>
    <property type="evidence" value="ECO:0007669"/>
    <property type="project" value="UniProtKB-UniRule"/>
</dbReference>
<dbReference type="GO" id="GO:0003977">
    <property type="term" value="F:UDP-N-acetylglucosamine diphosphorylase activity"/>
    <property type="evidence" value="ECO:0007669"/>
    <property type="project" value="UniProtKB-UniRule"/>
</dbReference>
<dbReference type="GO" id="GO:0000902">
    <property type="term" value="P:cell morphogenesis"/>
    <property type="evidence" value="ECO:0007669"/>
    <property type="project" value="UniProtKB-UniRule"/>
</dbReference>
<dbReference type="GO" id="GO:0071555">
    <property type="term" value="P:cell wall organization"/>
    <property type="evidence" value="ECO:0007669"/>
    <property type="project" value="UniProtKB-KW"/>
</dbReference>
<dbReference type="GO" id="GO:0009245">
    <property type="term" value="P:lipid A biosynthetic process"/>
    <property type="evidence" value="ECO:0007669"/>
    <property type="project" value="UniProtKB-UniRule"/>
</dbReference>
<dbReference type="GO" id="GO:0009252">
    <property type="term" value="P:peptidoglycan biosynthetic process"/>
    <property type="evidence" value="ECO:0007669"/>
    <property type="project" value="UniProtKB-UniRule"/>
</dbReference>
<dbReference type="GO" id="GO:0008360">
    <property type="term" value="P:regulation of cell shape"/>
    <property type="evidence" value="ECO:0007669"/>
    <property type="project" value="UniProtKB-KW"/>
</dbReference>
<dbReference type="GO" id="GO:0006048">
    <property type="term" value="P:UDP-N-acetylglucosamine biosynthetic process"/>
    <property type="evidence" value="ECO:0007669"/>
    <property type="project" value="UniProtKB-UniPathway"/>
</dbReference>
<dbReference type="CDD" id="cd02540">
    <property type="entry name" value="GT2_GlmU_N_bac"/>
    <property type="match status" value="1"/>
</dbReference>
<dbReference type="CDD" id="cd03353">
    <property type="entry name" value="LbH_GlmU_C"/>
    <property type="match status" value="1"/>
</dbReference>
<dbReference type="Gene3D" id="2.160.10.10">
    <property type="entry name" value="Hexapeptide repeat proteins"/>
    <property type="match status" value="1"/>
</dbReference>
<dbReference type="Gene3D" id="3.90.550.10">
    <property type="entry name" value="Spore Coat Polysaccharide Biosynthesis Protein SpsA, Chain A"/>
    <property type="match status" value="1"/>
</dbReference>
<dbReference type="HAMAP" id="MF_01631">
    <property type="entry name" value="GlmU"/>
    <property type="match status" value="1"/>
</dbReference>
<dbReference type="InterPro" id="IPR005882">
    <property type="entry name" value="Bifunctional_GlmU"/>
</dbReference>
<dbReference type="InterPro" id="IPR050065">
    <property type="entry name" value="GlmU-like"/>
</dbReference>
<dbReference type="InterPro" id="IPR038009">
    <property type="entry name" value="GlmU_C_LbH"/>
</dbReference>
<dbReference type="InterPro" id="IPR001451">
    <property type="entry name" value="Hexapep"/>
</dbReference>
<dbReference type="InterPro" id="IPR025877">
    <property type="entry name" value="MobA-like_NTP_Trfase"/>
</dbReference>
<dbReference type="InterPro" id="IPR029044">
    <property type="entry name" value="Nucleotide-diphossugar_trans"/>
</dbReference>
<dbReference type="InterPro" id="IPR011004">
    <property type="entry name" value="Trimer_LpxA-like_sf"/>
</dbReference>
<dbReference type="NCBIfam" id="TIGR01173">
    <property type="entry name" value="glmU"/>
    <property type="match status" value="1"/>
</dbReference>
<dbReference type="PANTHER" id="PTHR43584:SF3">
    <property type="entry name" value="BIFUNCTIONAL PROTEIN GLMU"/>
    <property type="match status" value="1"/>
</dbReference>
<dbReference type="PANTHER" id="PTHR43584">
    <property type="entry name" value="NUCLEOTIDYL TRANSFERASE"/>
    <property type="match status" value="1"/>
</dbReference>
<dbReference type="Pfam" id="PF00132">
    <property type="entry name" value="Hexapep"/>
    <property type="match status" value="1"/>
</dbReference>
<dbReference type="Pfam" id="PF14602">
    <property type="entry name" value="Hexapep_2"/>
    <property type="match status" value="1"/>
</dbReference>
<dbReference type="Pfam" id="PF12804">
    <property type="entry name" value="NTP_transf_3"/>
    <property type="match status" value="1"/>
</dbReference>
<dbReference type="SUPFAM" id="SSF53448">
    <property type="entry name" value="Nucleotide-diphospho-sugar transferases"/>
    <property type="match status" value="1"/>
</dbReference>
<dbReference type="SUPFAM" id="SSF51161">
    <property type="entry name" value="Trimeric LpxA-like enzymes"/>
    <property type="match status" value="1"/>
</dbReference>
<keyword id="KW-0012">Acyltransferase</keyword>
<keyword id="KW-0133">Cell shape</keyword>
<keyword id="KW-0961">Cell wall biogenesis/degradation</keyword>
<keyword id="KW-0963">Cytoplasm</keyword>
<keyword id="KW-0460">Magnesium</keyword>
<keyword id="KW-0479">Metal-binding</keyword>
<keyword id="KW-0511">Multifunctional enzyme</keyword>
<keyword id="KW-0548">Nucleotidyltransferase</keyword>
<keyword id="KW-0573">Peptidoglycan synthesis</keyword>
<keyword id="KW-0677">Repeat</keyword>
<keyword id="KW-0808">Transferase</keyword>
<proteinExistence type="inferred from homology"/>
<organism>
    <name type="scientific">Pseudomonas entomophila (strain L48)</name>
    <dbReference type="NCBI Taxonomy" id="384676"/>
    <lineage>
        <taxon>Bacteria</taxon>
        <taxon>Pseudomonadati</taxon>
        <taxon>Pseudomonadota</taxon>
        <taxon>Gammaproteobacteria</taxon>
        <taxon>Pseudomonadales</taxon>
        <taxon>Pseudomonadaceae</taxon>
        <taxon>Pseudomonas</taxon>
    </lineage>
</organism>
<sequence length="455" mass="48586">MSLDIVILAAGQGTRMRSALPKVLHPVAGNSMLGHVIHSARQLQPQGIHVVIGHGAEQVRERLAAEDLNFVMQDKQLGTGHAVAQALPAITADTVLVLYGDVPLIEVETLQRLLAKVSEQQLGLLTVTLQDPTGYGRIVRDAAGNVTAIVEHKDASEAQKAIKEGNTGILAMPAARLADWMGRLSNNNAQGEYYLTDVIAMAVADGLVVATEQPHDPMEVQGANDRRQLSELERHYQLREGRRLMAQGVTLRDPARFDVRGEVTVGRDVLIDINVILEGKVVIEDDVQIGPNCVIKDSTLRKGVVIKANSHIEGAVMGEGSDAGPFARLRPGSVLEAKAHVGNFVELKNAHLGEGAKAGHLTYLGDAEIGARTNIGAGTITCNYDGANKFRTVMGEDVFIGSNNSLVAPVEIQAGATTAAGSTITQTVEAGQLGVARARQRNIEGWKRPEKIKKS</sequence>
<accession>Q1I2I9</accession>
<comment type="function">
    <text evidence="1">Catalyzes the last two sequential reactions in the de novo biosynthetic pathway for UDP-N-acetylglucosamine (UDP-GlcNAc). The C-terminal domain catalyzes the transfer of acetyl group from acetyl coenzyme A to glucosamine-1-phosphate (GlcN-1-P) to produce N-acetylglucosamine-1-phosphate (GlcNAc-1-P), which is converted into UDP-GlcNAc by the transfer of uridine 5-monophosphate (from uridine 5-triphosphate), a reaction catalyzed by the N-terminal domain.</text>
</comment>
<comment type="catalytic activity">
    <reaction evidence="1">
        <text>alpha-D-glucosamine 1-phosphate + acetyl-CoA = N-acetyl-alpha-D-glucosamine 1-phosphate + CoA + H(+)</text>
        <dbReference type="Rhea" id="RHEA:13725"/>
        <dbReference type="ChEBI" id="CHEBI:15378"/>
        <dbReference type="ChEBI" id="CHEBI:57287"/>
        <dbReference type="ChEBI" id="CHEBI:57288"/>
        <dbReference type="ChEBI" id="CHEBI:57776"/>
        <dbReference type="ChEBI" id="CHEBI:58516"/>
        <dbReference type="EC" id="2.3.1.157"/>
    </reaction>
</comment>
<comment type="catalytic activity">
    <reaction evidence="1">
        <text>N-acetyl-alpha-D-glucosamine 1-phosphate + UTP + H(+) = UDP-N-acetyl-alpha-D-glucosamine + diphosphate</text>
        <dbReference type="Rhea" id="RHEA:13509"/>
        <dbReference type="ChEBI" id="CHEBI:15378"/>
        <dbReference type="ChEBI" id="CHEBI:33019"/>
        <dbReference type="ChEBI" id="CHEBI:46398"/>
        <dbReference type="ChEBI" id="CHEBI:57705"/>
        <dbReference type="ChEBI" id="CHEBI:57776"/>
        <dbReference type="EC" id="2.7.7.23"/>
    </reaction>
</comment>
<comment type="cofactor">
    <cofactor evidence="1">
        <name>Mg(2+)</name>
        <dbReference type="ChEBI" id="CHEBI:18420"/>
    </cofactor>
    <text evidence="1">Binds 1 Mg(2+) ion per subunit.</text>
</comment>
<comment type="pathway">
    <text evidence="1">Nucleotide-sugar biosynthesis; UDP-N-acetyl-alpha-D-glucosamine biosynthesis; N-acetyl-alpha-D-glucosamine 1-phosphate from alpha-D-glucosamine 6-phosphate (route II): step 2/2.</text>
</comment>
<comment type="pathway">
    <text evidence="1">Nucleotide-sugar biosynthesis; UDP-N-acetyl-alpha-D-glucosamine biosynthesis; UDP-N-acetyl-alpha-D-glucosamine from N-acetyl-alpha-D-glucosamine 1-phosphate: step 1/1.</text>
</comment>
<comment type="pathway">
    <text evidence="1">Bacterial outer membrane biogenesis; LPS lipid A biosynthesis.</text>
</comment>
<comment type="subunit">
    <text evidence="1">Homotrimer.</text>
</comment>
<comment type="subcellular location">
    <subcellularLocation>
        <location evidence="1">Cytoplasm</location>
    </subcellularLocation>
</comment>
<comment type="similarity">
    <text evidence="1">In the N-terminal section; belongs to the N-acetylglucosamine-1-phosphate uridyltransferase family.</text>
</comment>
<comment type="similarity">
    <text evidence="1">In the C-terminal section; belongs to the transferase hexapeptide repeat family.</text>
</comment>